<protein>
    <recommendedName>
        <fullName>Protein DVR-1</fullName>
    </recommendedName>
    <alternativeName>
        <fullName>Vegetal hemisphere VG1 protein</fullName>
        <shortName>VG-1</shortName>
    </alternativeName>
</protein>
<accession>P09534</accession>
<feature type="signal peptide" evidence="2">
    <location>
        <begin position="1"/>
        <end position="16"/>
    </location>
</feature>
<feature type="propeptide" id="PRO_0000033814">
    <location>
        <begin position="17"/>
        <end position="246"/>
    </location>
</feature>
<feature type="chain" id="PRO_0000033815" description="Protein DVR-1">
    <location>
        <begin position="247"/>
        <end position="360"/>
    </location>
</feature>
<feature type="glycosylation site" description="N-linked (GlcNAc...) asparagine" evidence="4">
    <location>
        <position position="113"/>
    </location>
</feature>
<feature type="glycosylation site" description="N-linked (GlcNAc...) asparagine" evidence="4">
    <location>
        <position position="181"/>
    </location>
</feature>
<feature type="glycosylation site" description="N-linked (GlcNAc...) asparagine" evidence="4">
    <location>
        <position position="301"/>
    </location>
</feature>
<feature type="disulfide bond" evidence="1">
    <location>
        <begin position="259"/>
        <end position="325"/>
    </location>
</feature>
<feature type="disulfide bond" evidence="1">
    <location>
        <begin position="288"/>
        <end position="357"/>
    </location>
</feature>
<feature type="disulfide bond" evidence="1">
    <location>
        <begin position="292"/>
        <end position="359"/>
    </location>
</feature>
<feature type="disulfide bond" description="Interchain" evidence="1">
    <location>
        <position position="324"/>
    </location>
</feature>
<evidence type="ECO:0000250" key="1"/>
<evidence type="ECO:0000255" key="2"/>
<evidence type="ECO:0000305" key="3"/>
<evidence type="ECO:0000305" key="4">
    <source>
    </source>
</evidence>
<proteinExistence type="evidence at protein level"/>
<sequence>MVWLRLWAFLHILAIVTLDPELKRREELFLRSLGFSSKPNPVSPPPVPSILWRIFNQRMGSSIQKKKPDLCFVEEFNVPGSVIRVFPDQGRFIIPYSDDIHPTQCLEKRLFFNISAIEKEERVTMGSGIEVQPEHLLRKGIDLRLYRTLQITLKGMGRSKTSRKLLVAQTFRLLHKSLFFNLTEICQSWQDPLKNLGLVLEIFPKKESSWMSTANDECKDIQTFLYTSLLTVTLNPLRCKRPRRKRSYSKLPFTASNICKKRHLYVEFKDVGWQNWVIAPQGYMANYCYGECPYPLTEILNGSNHAILQTLVHSIEPEDIPLPCCVPTKMSPISMLFYDNNDNVVLRHYENMAVDECGCR</sequence>
<keyword id="KW-0165">Cleavage on pair of basic residues</keyword>
<keyword id="KW-1015">Disulfide bond</keyword>
<keyword id="KW-0325">Glycoprotein</keyword>
<keyword id="KW-0339">Growth factor</keyword>
<keyword id="KW-0497">Mitogen</keyword>
<keyword id="KW-1185">Reference proteome</keyword>
<keyword id="KW-0964">Secreted</keyword>
<keyword id="KW-0732">Signal</keyword>
<dbReference type="EMBL" id="M18055">
    <property type="protein sequence ID" value="AAA49727.1"/>
    <property type="molecule type" value="Genomic_DNA"/>
</dbReference>
<dbReference type="PIR" id="A29619">
    <property type="entry name" value="A29619"/>
</dbReference>
<dbReference type="SMR" id="P09534"/>
<dbReference type="GlyCosmos" id="P09534">
    <property type="glycosylation" value="3 sites, No reported glycans"/>
</dbReference>
<dbReference type="iPTMnet" id="P09534"/>
<dbReference type="AGR" id="Xenbase:XB-GENE-17335633"/>
<dbReference type="Xenbase" id="XB-GENE-17335633">
    <property type="gene designation" value="gdf1.L"/>
</dbReference>
<dbReference type="Proteomes" id="UP000186698">
    <property type="component" value="Unplaced"/>
</dbReference>
<dbReference type="GO" id="GO:0005615">
    <property type="term" value="C:extracellular space"/>
    <property type="evidence" value="ECO:0000318"/>
    <property type="project" value="GO_Central"/>
</dbReference>
<dbReference type="GO" id="GO:0005125">
    <property type="term" value="F:cytokine activity"/>
    <property type="evidence" value="ECO:0000318"/>
    <property type="project" value="GO_Central"/>
</dbReference>
<dbReference type="GO" id="GO:0008083">
    <property type="term" value="F:growth factor activity"/>
    <property type="evidence" value="ECO:0007669"/>
    <property type="project" value="UniProtKB-KW"/>
</dbReference>
<dbReference type="GO" id="GO:0051781">
    <property type="term" value="P:positive regulation of cell division"/>
    <property type="evidence" value="ECO:0007669"/>
    <property type="project" value="UniProtKB-KW"/>
</dbReference>
<dbReference type="CDD" id="cd13764">
    <property type="entry name" value="TGF_beta_GDF1_3_like"/>
    <property type="match status" value="1"/>
</dbReference>
<dbReference type="FunFam" id="2.10.90.10:FF:000001">
    <property type="entry name" value="Bone morphogenetic protein 4"/>
    <property type="match status" value="1"/>
</dbReference>
<dbReference type="Gene3D" id="2.10.90.10">
    <property type="entry name" value="Cystine-knot cytokines"/>
    <property type="match status" value="1"/>
</dbReference>
<dbReference type="InterPro" id="IPR029034">
    <property type="entry name" value="Cystine-knot_cytokine"/>
</dbReference>
<dbReference type="InterPro" id="IPR001839">
    <property type="entry name" value="TGF-b_C"/>
</dbReference>
<dbReference type="InterPro" id="IPR015615">
    <property type="entry name" value="TGF-beta-rel"/>
</dbReference>
<dbReference type="InterPro" id="IPR017948">
    <property type="entry name" value="TGFb_CS"/>
</dbReference>
<dbReference type="PANTHER" id="PTHR11848:SF294">
    <property type="entry name" value="PROTEIN DVR-1"/>
    <property type="match status" value="1"/>
</dbReference>
<dbReference type="PANTHER" id="PTHR11848">
    <property type="entry name" value="TGF-BETA FAMILY"/>
    <property type="match status" value="1"/>
</dbReference>
<dbReference type="Pfam" id="PF00019">
    <property type="entry name" value="TGF_beta"/>
    <property type="match status" value="1"/>
</dbReference>
<dbReference type="SMART" id="SM00204">
    <property type="entry name" value="TGFB"/>
    <property type="match status" value="1"/>
</dbReference>
<dbReference type="SUPFAM" id="SSF57501">
    <property type="entry name" value="Cystine-knot cytokines"/>
    <property type="match status" value="1"/>
</dbReference>
<dbReference type="PROSITE" id="PS00250">
    <property type="entry name" value="TGF_BETA_1"/>
    <property type="match status" value="1"/>
</dbReference>
<dbReference type="PROSITE" id="PS51362">
    <property type="entry name" value="TGF_BETA_2"/>
    <property type="match status" value="1"/>
</dbReference>
<organism>
    <name type="scientific">Xenopus laevis</name>
    <name type="common">African clawed frog</name>
    <dbReference type="NCBI Taxonomy" id="8355"/>
    <lineage>
        <taxon>Eukaryota</taxon>
        <taxon>Metazoa</taxon>
        <taxon>Chordata</taxon>
        <taxon>Craniata</taxon>
        <taxon>Vertebrata</taxon>
        <taxon>Euteleostomi</taxon>
        <taxon>Amphibia</taxon>
        <taxon>Batrachia</taxon>
        <taxon>Anura</taxon>
        <taxon>Pipoidea</taxon>
        <taxon>Pipidae</taxon>
        <taxon>Xenopodinae</taxon>
        <taxon>Xenopus</taxon>
        <taxon>Xenopus</taxon>
    </lineage>
</organism>
<name>DVR1_XENLA</name>
<gene>
    <name type="primary">dvr1</name>
    <name type="synonym">vg1</name>
</gene>
<reference key="1">
    <citation type="journal article" date="1987" name="Cell">
        <title>A maternal mRNA localized to the vegetal hemisphere in Xenopus eggs codes for a growth factor related to TGF-beta.</title>
        <authorList>
            <person name="Weeks D.L."/>
            <person name="Melton D.A."/>
        </authorList>
    </citation>
    <scope>NUCLEOTIDE SEQUENCE [GENOMIC DNA]</scope>
</reference>
<reference key="2">
    <citation type="journal article" date="1989" name="EMBO J.">
        <title>Developmental expression of the protein product of Vg1, a localized maternal mRNA in the frog Xenopus laevis.</title>
        <authorList>
            <person name="Dale L."/>
            <person name="Matthews G."/>
            <person name="Tabe L."/>
            <person name="Colman A."/>
        </authorList>
    </citation>
    <scope>GLYCOSYLATION AT ASN-113; ASN-181 AND ASN-301</scope>
</reference>
<comment type="function">
    <text>Serves to facilitate the differentiation of either mesoderm or endoderm either as a cofactor in an instructive signal or by providing permissive environment.</text>
</comment>
<comment type="subunit">
    <text evidence="3">Homodimer.</text>
</comment>
<comment type="subcellular location">
    <subcellularLocation>
        <location>Secreted</location>
    </subcellularLocation>
</comment>
<comment type="tissue specificity">
    <text>Vegetal region of the egg.</text>
</comment>
<comment type="developmental stage">
    <text>Abundant in oocytes and present throughout cleavage and gastrula stage. Not readily detected at a stage when somitogenesis is nearly complete in 24 hours embryos. Steady state level decreases in a continuous fashion with developmental age.</text>
</comment>
<comment type="similarity">
    <text evidence="3">Belongs to the TGF-beta family.</text>
</comment>